<keyword id="KW-0328">Glycosyltransferase</keyword>
<keyword id="KW-0808">Transferase</keyword>
<gene>
    <name evidence="2" type="primary">deoD</name>
    <name type="ordered locus">CPF_1652</name>
</gene>
<accession>Q0TQJ7</accession>
<comment type="function">
    <text evidence="2">Catalyzes the reversible phosphorolytic breakdown of the N-glycosidic bond in the beta-(deoxy)ribonucleoside molecules, with the formation of the corresponding free purine bases and pentose-1-phosphate.</text>
</comment>
<comment type="catalytic activity">
    <reaction evidence="2">
        <text>a purine D-ribonucleoside + phosphate = a purine nucleobase + alpha-D-ribose 1-phosphate</text>
        <dbReference type="Rhea" id="RHEA:19805"/>
        <dbReference type="ChEBI" id="CHEBI:26386"/>
        <dbReference type="ChEBI" id="CHEBI:43474"/>
        <dbReference type="ChEBI" id="CHEBI:57720"/>
        <dbReference type="ChEBI" id="CHEBI:142355"/>
        <dbReference type="EC" id="2.4.2.1"/>
    </reaction>
</comment>
<comment type="catalytic activity">
    <reaction evidence="2">
        <text>a purine 2'-deoxy-D-ribonucleoside + phosphate = a purine nucleobase + 2-deoxy-alpha-D-ribose 1-phosphate</text>
        <dbReference type="Rhea" id="RHEA:36431"/>
        <dbReference type="ChEBI" id="CHEBI:26386"/>
        <dbReference type="ChEBI" id="CHEBI:43474"/>
        <dbReference type="ChEBI" id="CHEBI:57259"/>
        <dbReference type="ChEBI" id="CHEBI:142361"/>
        <dbReference type="EC" id="2.4.2.1"/>
    </reaction>
</comment>
<comment type="subunit">
    <text evidence="2">Homohexamer; trimer of homodimers.</text>
</comment>
<comment type="similarity">
    <text evidence="2">Belongs to the PNP/UDP phosphorylase family.</text>
</comment>
<reference key="1">
    <citation type="journal article" date="2006" name="Genome Res.">
        <title>Skewed genomic variability in strains of the toxigenic bacterial pathogen, Clostridium perfringens.</title>
        <authorList>
            <person name="Myers G.S.A."/>
            <person name="Rasko D.A."/>
            <person name="Cheung J.K."/>
            <person name="Ravel J."/>
            <person name="Seshadri R."/>
            <person name="DeBoy R.T."/>
            <person name="Ren Q."/>
            <person name="Varga J."/>
            <person name="Awad M.M."/>
            <person name="Brinkac L.M."/>
            <person name="Daugherty S.C."/>
            <person name="Haft D.H."/>
            <person name="Dodson R.J."/>
            <person name="Madupu R."/>
            <person name="Nelson W.C."/>
            <person name="Rosovitz M.J."/>
            <person name="Sullivan S.A."/>
            <person name="Khouri H."/>
            <person name="Dimitrov G.I."/>
            <person name="Watkins K.L."/>
            <person name="Mulligan S."/>
            <person name="Benton J."/>
            <person name="Radune D."/>
            <person name="Fisher D.J."/>
            <person name="Atkins H.S."/>
            <person name="Hiscox T."/>
            <person name="Jost B.H."/>
            <person name="Billington S.J."/>
            <person name="Songer J.G."/>
            <person name="McClane B.A."/>
            <person name="Titball R.W."/>
            <person name="Rood J.I."/>
            <person name="Melville S.B."/>
            <person name="Paulsen I.T."/>
        </authorList>
    </citation>
    <scope>NUCLEOTIDE SEQUENCE [LARGE SCALE GENOMIC DNA]</scope>
    <source>
        <strain>ATCC 13124 / DSM 756 / JCM 1290 / NCIMB 6125 / NCTC 8237 / S 107 / Type A</strain>
    </source>
</reference>
<sequence length="235" mass="25611">MSIHIGAKEGQIAETILLPGDPLRAKFIAETFLENPVCYNEVRGMLGYTGTYKGKKISVQGTGMGVPSISIYVNELIRDYGVKNLIRVGTAGGMQEDIKVRDLVLAMSSHTDSAINKVRFNGLDFAPTASFKLLKAAYDTAVEKGYSPKVGSVFTADSFYNDNPEAWKQWAKFGTLAVEMETAALYTLAAKYGVNALTILTISDHLITAEETTSEERQTTFTKMMEVALDAAITL</sequence>
<dbReference type="EC" id="2.4.2.1" evidence="2"/>
<dbReference type="EMBL" id="CP000246">
    <property type="protein sequence ID" value="ABG84661.1"/>
    <property type="molecule type" value="Genomic_DNA"/>
</dbReference>
<dbReference type="RefSeq" id="WP_003470332.1">
    <property type="nucleotide sequence ID" value="NC_008261.1"/>
</dbReference>
<dbReference type="SMR" id="Q0TQJ7"/>
<dbReference type="STRING" id="195103.CPF_1652"/>
<dbReference type="PaxDb" id="195103-CPF_1652"/>
<dbReference type="GeneID" id="93002060"/>
<dbReference type="KEGG" id="cpf:CPF_1652"/>
<dbReference type="eggNOG" id="COG0813">
    <property type="taxonomic scope" value="Bacteria"/>
</dbReference>
<dbReference type="HOGENOM" id="CLU_068457_2_0_9"/>
<dbReference type="Proteomes" id="UP000001823">
    <property type="component" value="Chromosome"/>
</dbReference>
<dbReference type="GO" id="GO:0005829">
    <property type="term" value="C:cytosol"/>
    <property type="evidence" value="ECO:0007669"/>
    <property type="project" value="TreeGrafter"/>
</dbReference>
<dbReference type="GO" id="GO:0004731">
    <property type="term" value="F:purine-nucleoside phosphorylase activity"/>
    <property type="evidence" value="ECO:0007669"/>
    <property type="project" value="UniProtKB-UniRule"/>
</dbReference>
<dbReference type="GO" id="GO:0006152">
    <property type="term" value="P:purine nucleoside catabolic process"/>
    <property type="evidence" value="ECO:0007669"/>
    <property type="project" value="TreeGrafter"/>
</dbReference>
<dbReference type="CDD" id="cd09006">
    <property type="entry name" value="PNP_EcPNPI-like"/>
    <property type="match status" value="1"/>
</dbReference>
<dbReference type="Gene3D" id="3.40.50.1580">
    <property type="entry name" value="Nucleoside phosphorylase domain"/>
    <property type="match status" value="1"/>
</dbReference>
<dbReference type="HAMAP" id="MF_01627">
    <property type="entry name" value="Pur_nucleosid_phosp"/>
    <property type="match status" value="1"/>
</dbReference>
<dbReference type="InterPro" id="IPR004402">
    <property type="entry name" value="DeoD-type"/>
</dbReference>
<dbReference type="InterPro" id="IPR018016">
    <property type="entry name" value="Nucleoside_phosphorylase_CS"/>
</dbReference>
<dbReference type="InterPro" id="IPR000845">
    <property type="entry name" value="Nucleoside_phosphorylase_d"/>
</dbReference>
<dbReference type="InterPro" id="IPR035994">
    <property type="entry name" value="Nucleoside_phosphorylase_sf"/>
</dbReference>
<dbReference type="NCBIfam" id="TIGR00107">
    <property type="entry name" value="deoD"/>
    <property type="match status" value="1"/>
</dbReference>
<dbReference type="NCBIfam" id="NF004489">
    <property type="entry name" value="PRK05819.1"/>
    <property type="match status" value="1"/>
</dbReference>
<dbReference type="PANTHER" id="PTHR43691:SF11">
    <property type="entry name" value="FI09636P-RELATED"/>
    <property type="match status" value="1"/>
</dbReference>
<dbReference type="PANTHER" id="PTHR43691">
    <property type="entry name" value="URIDINE PHOSPHORYLASE"/>
    <property type="match status" value="1"/>
</dbReference>
<dbReference type="Pfam" id="PF01048">
    <property type="entry name" value="PNP_UDP_1"/>
    <property type="match status" value="1"/>
</dbReference>
<dbReference type="SUPFAM" id="SSF53167">
    <property type="entry name" value="Purine and uridine phosphorylases"/>
    <property type="match status" value="1"/>
</dbReference>
<dbReference type="PROSITE" id="PS01232">
    <property type="entry name" value="PNP_UDP_1"/>
    <property type="match status" value="1"/>
</dbReference>
<proteinExistence type="inferred from homology"/>
<organism>
    <name type="scientific">Clostridium perfringens (strain ATCC 13124 / DSM 756 / JCM 1290 / NCIMB 6125 / NCTC 8237 / Type A)</name>
    <dbReference type="NCBI Taxonomy" id="195103"/>
    <lineage>
        <taxon>Bacteria</taxon>
        <taxon>Bacillati</taxon>
        <taxon>Bacillota</taxon>
        <taxon>Clostridia</taxon>
        <taxon>Eubacteriales</taxon>
        <taxon>Clostridiaceae</taxon>
        <taxon>Clostridium</taxon>
    </lineage>
</organism>
<name>DEOD_CLOP1</name>
<feature type="chain" id="PRO_1000069622" description="Purine nucleoside phosphorylase DeoD-type">
    <location>
        <begin position="1"/>
        <end position="235"/>
    </location>
</feature>
<feature type="active site" description="Proton donor" evidence="2">
    <location>
        <position position="204"/>
    </location>
</feature>
<feature type="binding site" evidence="1">
    <location>
        <position position="4"/>
    </location>
    <ligand>
        <name>a purine D-ribonucleoside</name>
        <dbReference type="ChEBI" id="CHEBI:142355"/>
        <note>ligand shared between dimeric partners</note>
    </ligand>
</feature>
<feature type="binding site" description="in other chain" evidence="1">
    <location>
        <position position="20"/>
    </location>
    <ligand>
        <name>phosphate</name>
        <dbReference type="ChEBI" id="CHEBI:43474"/>
        <note>ligand shared between dimeric partners</note>
    </ligand>
</feature>
<feature type="binding site" description="in other chain" evidence="1">
    <location>
        <position position="24"/>
    </location>
    <ligand>
        <name>phosphate</name>
        <dbReference type="ChEBI" id="CHEBI:43474"/>
        <note>ligand shared between dimeric partners</note>
    </ligand>
</feature>
<feature type="binding site" evidence="1">
    <location>
        <position position="43"/>
    </location>
    <ligand>
        <name>phosphate</name>
        <dbReference type="ChEBI" id="CHEBI:43474"/>
        <note>ligand shared between dimeric partners</note>
    </ligand>
</feature>
<feature type="binding site" description="in other chain" evidence="1">
    <location>
        <begin position="87"/>
        <end position="90"/>
    </location>
    <ligand>
        <name>phosphate</name>
        <dbReference type="ChEBI" id="CHEBI:43474"/>
        <note>ligand shared between dimeric partners</note>
    </ligand>
</feature>
<feature type="binding site" description="in other chain" evidence="1">
    <location>
        <begin position="179"/>
        <end position="181"/>
    </location>
    <ligand>
        <name>a purine D-ribonucleoside</name>
        <dbReference type="ChEBI" id="CHEBI:142355"/>
        <note>ligand shared between dimeric partners</note>
    </ligand>
</feature>
<feature type="binding site" description="in other chain" evidence="1">
    <location>
        <begin position="203"/>
        <end position="204"/>
    </location>
    <ligand>
        <name>a purine D-ribonucleoside</name>
        <dbReference type="ChEBI" id="CHEBI:142355"/>
        <note>ligand shared between dimeric partners</note>
    </ligand>
</feature>
<feature type="site" description="Important for catalytic activity" evidence="2">
    <location>
        <position position="217"/>
    </location>
</feature>
<evidence type="ECO:0000250" key="1">
    <source>
        <dbReference type="UniProtKB" id="P50389"/>
    </source>
</evidence>
<evidence type="ECO:0000255" key="2">
    <source>
        <dbReference type="HAMAP-Rule" id="MF_01627"/>
    </source>
</evidence>
<protein>
    <recommendedName>
        <fullName evidence="2">Purine nucleoside phosphorylase DeoD-type</fullName>
        <shortName evidence="2">PNP</shortName>
        <ecNumber evidence="2">2.4.2.1</ecNumber>
    </recommendedName>
</protein>